<comment type="function">
    <text evidence="2">Part of the ABC transporter complex OppABCDF involved in the uptake of oligopeptides (By similarity). Probably responsible for energy coupling to the transport system (By similarity).</text>
</comment>
<comment type="catalytic activity">
    <reaction evidence="2">
        <text>a [peptide](out) + ATP + H2O = a [peptide](in) + ADP + phosphate + H(+)</text>
        <dbReference type="Rhea" id="RHEA:78459"/>
        <dbReference type="Rhea" id="RHEA-COMP:19083"/>
        <dbReference type="ChEBI" id="CHEBI:15377"/>
        <dbReference type="ChEBI" id="CHEBI:15378"/>
        <dbReference type="ChEBI" id="CHEBI:30616"/>
        <dbReference type="ChEBI" id="CHEBI:33710"/>
        <dbReference type="ChEBI" id="CHEBI:43474"/>
        <dbReference type="ChEBI" id="CHEBI:456216"/>
        <dbReference type="EC" id="7.4.2.6"/>
    </reaction>
    <physiologicalReaction direction="left-to-right" evidence="2">
        <dbReference type="Rhea" id="RHEA:78460"/>
    </physiologicalReaction>
</comment>
<comment type="subunit">
    <text evidence="2">The complex is composed of two ATP-binding proteins (OppD and OppF), two transmembrane proteins (OppB and OppC) and a solute-binding protein (OppA).</text>
</comment>
<comment type="subcellular location">
    <subcellularLocation>
        <location evidence="1">Cell inner membrane</location>
        <topology evidence="1">Peripheral membrane protein</topology>
    </subcellularLocation>
</comment>
<comment type="similarity">
    <text evidence="4">Belongs to the ABC transporter superfamily.</text>
</comment>
<proteinExistence type="inferred from homology"/>
<protein>
    <recommendedName>
        <fullName evidence="4">Oligopeptide transport ATP-binding protein OppF</fullName>
        <ecNumber evidence="2">7.4.2.6</ecNumber>
    </recommendedName>
</protein>
<evidence type="ECO:0000250" key="1">
    <source>
        <dbReference type="UniProtKB" id="P08007"/>
    </source>
</evidence>
<evidence type="ECO:0000250" key="2">
    <source>
        <dbReference type="UniProtKB" id="P77737"/>
    </source>
</evidence>
<evidence type="ECO:0000255" key="3">
    <source>
        <dbReference type="PROSITE-ProRule" id="PRU00434"/>
    </source>
</evidence>
<evidence type="ECO:0000305" key="4"/>
<gene>
    <name type="primary">oppF</name>
    <name type="ordered locus">HI_1120</name>
</gene>
<reference key="1">
    <citation type="journal article" date="1995" name="Science">
        <title>Whole-genome random sequencing and assembly of Haemophilus influenzae Rd.</title>
        <authorList>
            <person name="Fleischmann R.D."/>
            <person name="Adams M.D."/>
            <person name="White O."/>
            <person name="Clayton R.A."/>
            <person name="Kirkness E.F."/>
            <person name="Kerlavage A.R."/>
            <person name="Bult C.J."/>
            <person name="Tomb J.-F."/>
            <person name="Dougherty B.A."/>
            <person name="Merrick J.M."/>
            <person name="McKenney K."/>
            <person name="Sutton G.G."/>
            <person name="FitzHugh W."/>
            <person name="Fields C.A."/>
            <person name="Gocayne J.D."/>
            <person name="Scott J.D."/>
            <person name="Shirley R."/>
            <person name="Liu L.-I."/>
            <person name="Glodek A."/>
            <person name="Kelley J.M."/>
            <person name="Weidman J.F."/>
            <person name="Phillips C.A."/>
            <person name="Spriggs T."/>
            <person name="Hedblom E."/>
            <person name="Cotton M.D."/>
            <person name="Utterback T.R."/>
            <person name="Hanna M.C."/>
            <person name="Nguyen D.T."/>
            <person name="Saudek D.M."/>
            <person name="Brandon R.C."/>
            <person name="Fine L.D."/>
            <person name="Fritchman J.L."/>
            <person name="Fuhrmann J.L."/>
            <person name="Geoghagen N.S.M."/>
            <person name="Gnehm C.L."/>
            <person name="McDonald L.A."/>
            <person name="Small K.V."/>
            <person name="Fraser C.M."/>
            <person name="Smith H.O."/>
            <person name="Venter J.C."/>
        </authorList>
    </citation>
    <scope>NUCLEOTIDE SEQUENCE [LARGE SCALE GENOMIC DNA]</scope>
    <source>
        <strain>ATCC 51907 / DSM 11121 / KW20 / Rd</strain>
    </source>
</reference>
<organism>
    <name type="scientific">Haemophilus influenzae (strain ATCC 51907 / DSM 11121 / KW20 / Rd)</name>
    <dbReference type="NCBI Taxonomy" id="71421"/>
    <lineage>
        <taxon>Bacteria</taxon>
        <taxon>Pseudomonadati</taxon>
        <taxon>Pseudomonadota</taxon>
        <taxon>Gammaproteobacteria</taxon>
        <taxon>Pasteurellales</taxon>
        <taxon>Pasteurellaceae</taxon>
        <taxon>Haemophilus</taxon>
    </lineage>
</organism>
<name>OPPF_HAEIN</name>
<keyword id="KW-0067">ATP-binding</keyword>
<keyword id="KW-0997">Cell inner membrane</keyword>
<keyword id="KW-1003">Cell membrane</keyword>
<keyword id="KW-0472">Membrane</keyword>
<keyword id="KW-0547">Nucleotide-binding</keyword>
<keyword id="KW-0571">Peptide transport</keyword>
<keyword id="KW-0653">Protein transport</keyword>
<keyword id="KW-1185">Reference proteome</keyword>
<keyword id="KW-1278">Translocase</keyword>
<keyword id="KW-0813">Transport</keyword>
<feature type="chain" id="PRO_0000092673" description="Oligopeptide transport ATP-binding protein OppF">
    <location>
        <begin position="1"/>
        <end position="332"/>
    </location>
</feature>
<feature type="domain" description="ABC transporter" evidence="3">
    <location>
        <begin position="23"/>
        <end position="264"/>
    </location>
</feature>
<feature type="binding site" evidence="3">
    <location>
        <begin position="56"/>
        <end position="63"/>
    </location>
    <ligand>
        <name>ATP</name>
        <dbReference type="ChEBI" id="CHEBI:30616"/>
    </ligand>
</feature>
<accession>P45051</accession>
<sequence>MTVSNNKELLLEVNHLGVSFKIKNDKSLFFAKPQTLKAVKDVSFKLYAGETLGVVGESGCGKSTLARAIIGLVEASEGEILWLGKHLRKQSAKQWKETRKDIQMIFQDPLASLNPRMNIGEIIAEPLKIYQPHLSAAEVKEKVQAMMLKVGLLPNLINRYPHEFSGGQCQRIGIARALIIEPKMIICDEPVSALDVSIQAQVVNLLKSLQKEMGLSLIFIAHDLAVVKHISDRVLVMYLGNAMELGSDVEVYNDTKHPYTKALMSAVPIPDPKLERNKSIELLEGDLPSPINPPSGCVFRTRCLKADENCAKQKPPFTSQNNSHFVACLKVL</sequence>
<dbReference type="EC" id="7.4.2.6" evidence="2"/>
<dbReference type="EMBL" id="L42023">
    <property type="protein sequence ID" value="AAC22774.1"/>
    <property type="molecule type" value="Genomic_DNA"/>
</dbReference>
<dbReference type="PIR" id="B64184">
    <property type="entry name" value="B64184"/>
</dbReference>
<dbReference type="RefSeq" id="NP_439277.1">
    <property type="nucleotide sequence ID" value="NC_000907.1"/>
</dbReference>
<dbReference type="SMR" id="P45051"/>
<dbReference type="STRING" id="71421.HI_1120"/>
<dbReference type="EnsemblBacteria" id="AAC22774">
    <property type="protein sequence ID" value="AAC22774"/>
    <property type="gene ID" value="HI_1120"/>
</dbReference>
<dbReference type="KEGG" id="hin:HI_1120"/>
<dbReference type="PATRIC" id="fig|71421.8.peg.1169"/>
<dbReference type="eggNOG" id="COG4608">
    <property type="taxonomic scope" value="Bacteria"/>
</dbReference>
<dbReference type="HOGENOM" id="CLU_000604_1_23_6"/>
<dbReference type="OrthoDB" id="9784450at2"/>
<dbReference type="PhylomeDB" id="P45051"/>
<dbReference type="BioCyc" id="HINF71421:G1GJ1-1155-MONOMER"/>
<dbReference type="Proteomes" id="UP000000579">
    <property type="component" value="Chromosome"/>
</dbReference>
<dbReference type="GO" id="GO:0005886">
    <property type="term" value="C:plasma membrane"/>
    <property type="evidence" value="ECO:0007669"/>
    <property type="project" value="UniProtKB-SubCell"/>
</dbReference>
<dbReference type="GO" id="GO:0005524">
    <property type="term" value="F:ATP binding"/>
    <property type="evidence" value="ECO:0007669"/>
    <property type="project" value="UniProtKB-KW"/>
</dbReference>
<dbReference type="GO" id="GO:0016887">
    <property type="term" value="F:ATP hydrolysis activity"/>
    <property type="evidence" value="ECO:0007669"/>
    <property type="project" value="InterPro"/>
</dbReference>
<dbReference type="GO" id="GO:0015833">
    <property type="term" value="P:peptide transport"/>
    <property type="evidence" value="ECO:0007669"/>
    <property type="project" value="UniProtKB-KW"/>
</dbReference>
<dbReference type="GO" id="GO:0015031">
    <property type="term" value="P:protein transport"/>
    <property type="evidence" value="ECO:0007669"/>
    <property type="project" value="UniProtKB-KW"/>
</dbReference>
<dbReference type="GO" id="GO:0055085">
    <property type="term" value="P:transmembrane transport"/>
    <property type="evidence" value="ECO:0007669"/>
    <property type="project" value="UniProtKB-ARBA"/>
</dbReference>
<dbReference type="CDD" id="cd03257">
    <property type="entry name" value="ABC_NikE_OppD_transporters"/>
    <property type="match status" value="1"/>
</dbReference>
<dbReference type="FunFam" id="3.40.50.300:FF:000016">
    <property type="entry name" value="Oligopeptide ABC transporter ATP-binding component"/>
    <property type="match status" value="1"/>
</dbReference>
<dbReference type="Gene3D" id="3.40.50.300">
    <property type="entry name" value="P-loop containing nucleotide triphosphate hydrolases"/>
    <property type="match status" value="1"/>
</dbReference>
<dbReference type="InterPro" id="IPR003593">
    <property type="entry name" value="AAA+_ATPase"/>
</dbReference>
<dbReference type="InterPro" id="IPR050319">
    <property type="entry name" value="ABC_transp_ATP-bind"/>
</dbReference>
<dbReference type="InterPro" id="IPR003439">
    <property type="entry name" value="ABC_transporter-like_ATP-bd"/>
</dbReference>
<dbReference type="InterPro" id="IPR017871">
    <property type="entry name" value="ABC_transporter-like_CS"/>
</dbReference>
<dbReference type="InterPro" id="IPR013563">
    <property type="entry name" value="Oligopep_ABC_C"/>
</dbReference>
<dbReference type="InterPro" id="IPR027417">
    <property type="entry name" value="P-loop_NTPase"/>
</dbReference>
<dbReference type="NCBIfam" id="TIGR01727">
    <property type="entry name" value="oligo_HPY"/>
    <property type="match status" value="1"/>
</dbReference>
<dbReference type="NCBIfam" id="NF011659">
    <property type="entry name" value="PRK15079.1"/>
    <property type="match status" value="1"/>
</dbReference>
<dbReference type="PANTHER" id="PTHR43776:SF7">
    <property type="entry name" value="D,D-DIPEPTIDE TRANSPORT ATP-BINDING PROTEIN DDPF-RELATED"/>
    <property type="match status" value="1"/>
</dbReference>
<dbReference type="PANTHER" id="PTHR43776">
    <property type="entry name" value="TRANSPORT ATP-BINDING PROTEIN"/>
    <property type="match status" value="1"/>
</dbReference>
<dbReference type="Pfam" id="PF00005">
    <property type="entry name" value="ABC_tran"/>
    <property type="match status" value="1"/>
</dbReference>
<dbReference type="Pfam" id="PF08352">
    <property type="entry name" value="oligo_HPY"/>
    <property type="match status" value="1"/>
</dbReference>
<dbReference type="SMART" id="SM00382">
    <property type="entry name" value="AAA"/>
    <property type="match status" value="1"/>
</dbReference>
<dbReference type="SUPFAM" id="SSF52540">
    <property type="entry name" value="P-loop containing nucleoside triphosphate hydrolases"/>
    <property type="match status" value="1"/>
</dbReference>
<dbReference type="PROSITE" id="PS00211">
    <property type="entry name" value="ABC_TRANSPORTER_1"/>
    <property type="match status" value="1"/>
</dbReference>
<dbReference type="PROSITE" id="PS50893">
    <property type="entry name" value="ABC_TRANSPORTER_2"/>
    <property type="match status" value="1"/>
</dbReference>